<protein>
    <recommendedName>
        <fullName>Alpha-soluble NSF attachment protein</fullName>
        <shortName>SNAP-alpha</shortName>
    </recommendedName>
    <alternativeName>
        <fullName>N-ethylmaleimide-sensitive factor attachment protein</fullName>
    </alternativeName>
</protein>
<comment type="function">
    <text evidence="1">Required for vesicular transport between the endoplasmic reticulum and the Golgi apparatus. Also between the endosome and phagosome.</text>
</comment>
<comment type="interaction">
    <interactant intactId="EBI-195132">
        <id>Q23983</id>
    </interactant>
    <interactant intactId="EBI-129299">
        <id>Q9W1I8</id>
        <label>Snap29</label>
    </interactant>
    <organismsDiffer>false</organismsDiffer>
    <experiments>3</experiments>
</comment>
<comment type="interaction">
    <interactant intactId="EBI-195132">
        <id>Q23983</id>
    </interactant>
    <interactant intactId="EBI-173419">
        <id>Q9VR90</id>
        <label>Syx16</label>
    </interactant>
    <organismsDiffer>false</organismsDiffer>
    <experiments>4</experiments>
</comment>
<comment type="interaction">
    <interactant intactId="EBI-195132">
        <id>Q23983</id>
    </interactant>
    <interactant intactId="EBI-135062">
        <id>Q24547</id>
        <label>Syx1A</label>
    </interactant>
    <organismsDiffer>false</organismsDiffer>
    <experiments>5</experiments>
</comment>
<comment type="subcellular location">
    <subcellularLocation>
        <location evidence="1">Cytoplasmic vesicle</location>
    </subcellularLocation>
    <subcellularLocation>
        <location evidence="1">Membrane</location>
        <topology evidence="1">Peripheral membrane protein</topology>
    </subcellularLocation>
</comment>
<comment type="similarity">
    <text evidence="2">Belongs to the SNAP family.</text>
</comment>
<accession>Q23983</accession>
<accession>Q541G5</accession>
<gene>
    <name evidence="3" type="primary">alphaSnap</name>
    <name type="synonym">Snap</name>
    <name evidence="3" type="ORF">CG6625</name>
</gene>
<reference key="1">
    <citation type="journal article" date="1994" name="Proc. Natl. Acad. Sci. U.S.A.">
        <title>Neurally expressed Drosophila genes encoding homologs of the NSF and SNAP secretory proteins.</title>
        <authorList>
            <person name="Ordway R.W."/>
            <person name="Pallanck L."/>
            <person name="Ganetzky B."/>
        </authorList>
    </citation>
    <scope>NUCLEOTIDE SEQUENCE [MRNA]</scope>
    <source>
        <tissue>Head</tissue>
    </source>
</reference>
<reference key="2">
    <citation type="journal article" date="2000" name="Science">
        <title>The genome sequence of Drosophila melanogaster.</title>
        <authorList>
            <person name="Adams M.D."/>
            <person name="Celniker S.E."/>
            <person name="Holt R.A."/>
            <person name="Evans C.A."/>
            <person name="Gocayne J.D."/>
            <person name="Amanatides P.G."/>
            <person name="Scherer S.E."/>
            <person name="Li P.W."/>
            <person name="Hoskins R.A."/>
            <person name="Galle R.F."/>
            <person name="George R.A."/>
            <person name="Lewis S.E."/>
            <person name="Richards S."/>
            <person name="Ashburner M."/>
            <person name="Henderson S.N."/>
            <person name="Sutton G.G."/>
            <person name="Wortman J.R."/>
            <person name="Yandell M.D."/>
            <person name="Zhang Q."/>
            <person name="Chen L.X."/>
            <person name="Brandon R.C."/>
            <person name="Rogers Y.-H.C."/>
            <person name="Blazej R.G."/>
            <person name="Champe M."/>
            <person name="Pfeiffer B.D."/>
            <person name="Wan K.H."/>
            <person name="Doyle C."/>
            <person name="Baxter E.G."/>
            <person name="Helt G."/>
            <person name="Nelson C.R."/>
            <person name="Miklos G.L.G."/>
            <person name="Abril J.F."/>
            <person name="Agbayani A."/>
            <person name="An H.-J."/>
            <person name="Andrews-Pfannkoch C."/>
            <person name="Baldwin D."/>
            <person name="Ballew R.M."/>
            <person name="Basu A."/>
            <person name="Baxendale J."/>
            <person name="Bayraktaroglu L."/>
            <person name="Beasley E.M."/>
            <person name="Beeson K.Y."/>
            <person name="Benos P.V."/>
            <person name="Berman B.P."/>
            <person name="Bhandari D."/>
            <person name="Bolshakov S."/>
            <person name="Borkova D."/>
            <person name="Botchan M.R."/>
            <person name="Bouck J."/>
            <person name="Brokstein P."/>
            <person name="Brottier P."/>
            <person name="Burtis K.C."/>
            <person name="Busam D.A."/>
            <person name="Butler H."/>
            <person name="Cadieu E."/>
            <person name="Center A."/>
            <person name="Chandra I."/>
            <person name="Cherry J.M."/>
            <person name="Cawley S."/>
            <person name="Dahlke C."/>
            <person name="Davenport L.B."/>
            <person name="Davies P."/>
            <person name="de Pablos B."/>
            <person name="Delcher A."/>
            <person name="Deng Z."/>
            <person name="Mays A.D."/>
            <person name="Dew I."/>
            <person name="Dietz S.M."/>
            <person name="Dodson K."/>
            <person name="Doup L.E."/>
            <person name="Downes M."/>
            <person name="Dugan-Rocha S."/>
            <person name="Dunkov B.C."/>
            <person name="Dunn P."/>
            <person name="Durbin K.J."/>
            <person name="Evangelista C.C."/>
            <person name="Ferraz C."/>
            <person name="Ferriera S."/>
            <person name="Fleischmann W."/>
            <person name="Fosler C."/>
            <person name="Gabrielian A.E."/>
            <person name="Garg N.S."/>
            <person name="Gelbart W.M."/>
            <person name="Glasser K."/>
            <person name="Glodek A."/>
            <person name="Gong F."/>
            <person name="Gorrell J.H."/>
            <person name="Gu Z."/>
            <person name="Guan P."/>
            <person name="Harris M."/>
            <person name="Harris N.L."/>
            <person name="Harvey D.A."/>
            <person name="Heiman T.J."/>
            <person name="Hernandez J.R."/>
            <person name="Houck J."/>
            <person name="Hostin D."/>
            <person name="Houston K.A."/>
            <person name="Howland T.J."/>
            <person name="Wei M.-H."/>
            <person name="Ibegwam C."/>
            <person name="Jalali M."/>
            <person name="Kalush F."/>
            <person name="Karpen G.H."/>
            <person name="Ke Z."/>
            <person name="Kennison J.A."/>
            <person name="Ketchum K.A."/>
            <person name="Kimmel B.E."/>
            <person name="Kodira C.D."/>
            <person name="Kraft C.L."/>
            <person name="Kravitz S."/>
            <person name="Kulp D."/>
            <person name="Lai Z."/>
            <person name="Lasko P."/>
            <person name="Lei Y."/>
            <person name="Levitsky A.A."/>
            <person name="Li J.H."/>
            <person name="Li Z."/>
            <person name="Liang Y."/>
            <person name="Lin X."/>
            <person name="Liu X."/>
            <person name="Mattei B."/>
            <person name="McIntosh T.C."/>
            <person name="McLeod M.P."/>
            <person name="McPherson D."/>
            <person name="Merkulov G."/>
            <person name="Milshina N.V."/>
            <person name="Mobarry C."/>
            <person name="Morris J."/>
            <person name="Moshrefi A."/>
            <person name="Mount S.M."/>
            <person name="Moy M."/>
            <person name="Murphy B."/>
            <person name="Murphy L."/>
            <person name="Muzny D.M."/>
            <person name="Nelson D.L."/>
            <person name="Nelson D.R."/>
            <person name="Nelson K.A."/>
            <person name="Nixon K."/>
            <person name="Nusskern D.R."/>
            <person name="Pacleb J.M."/>
            <person name="Palazzolo M."/>
            <person name="Pittman G.S."/>
            <person name="Pan S."/>
            <person name="Pollard J."/>
            <person name="Puri V."/>
            <person name="Reese M.G."/>
            <person name="Reinert K."/>
            <person name="Remington K."/>
            <person name="Saunders R.D.C."/>
            <person name="Scheeler F."/>
            <person name="Shen H."/>
            <person name="Shue B.C."/>
            <person name="Siden-Kiamos I."/>
            <person name="Simpson M."/>
            <person name="Skupski M.P."/>
            <person name="Smith T.J."/>
            <person name="Spier E."/>
            <person name="Spradling A.C."/>
            <person name="Stapleton M."/>
            <person name="Strong R."/>
            <person name="Sun E."/>
            <person name="Svirskas R."/>
            <person name="Tector C."/>
            <person name="Turner R."/>
            <person name="Venter E."/>
            <person name="Wang A.H."/>
            <person name="Wang X."/>
            <person name="Wang Z.-Y."/>
            <person name="Wassarman D.A."/>
            <person name="Weinstock G.M."/>
            <person name="Weissenbach J."/>
            <person name="Williams S.M."/>
            <person name="Woodage T."/>
            <person name="Worley K.C."/>
            <person name="Wu D."/>
            <person name="Yang S."/>
            <person name="Yao Q.A."/>
            <person name="Ye J."/>
            <person name="Yeh R.-F."/>
            <person name="Zaveri J.S."/>
            <person name="Zhan M."/>
            <person name="Zhang G."/>
            <person name="Zhao Q."/>
            <person name="Zheng L."/>
            <person name="Zheng X.H."/>
            <person name="Zhong F.N."/>
            <person name="Zhong W."/>
            <person name="Zhou X."/>
            <person name="Zhu S.C."/>
            <person name="Zhu X."/>
            <person name="Smith H.O."/>
            <person name="Gibbs R.A."/>
            <person name="Myers E.W."/>
            <person name="Rubin G.M."/>
            <person name="Venter J.C."/>
        </authorList>
    </citation>
    <scope>NUCLEOTIDE SEQUENCE [LARGE SCALE GENOMIC DNA]</scope>
    <source>
        <strain>Berkeley</strain>
    </source>
</reference>
<reference key="3">
    <citation type="journal article" date="2002" name="Genome Biol.">
        <title>Annotation of the Drosophila melanogaster euchromatic genome: a systematic review.</title>
        <authorList>
            <person name="Misra S."/>
            <person name="Crosby M.A."/>
            <person name="Mungall C.J."/>
            <person name="Matthews B.B."/>
            <person name="Campbell K.S."/>
            <person name="Hradecky P."/>
            <person name="Huang Y."/>
            <person name="Kaminker J.S."/>
            <person name="Millburn G.H."/>
            <person name="Prochnik S.E."/>
            <person name="Smith C.D."/>
            <person name="Tupy J.L."/>
            <person name="Whitfield E.J."/>
            <person name="Bayraktaroglu L."/>
            <person name="Berman B.P."/>
            <person name="Bettencourt B.R."/>
            <person name="Celniker S.E."/>
            <person name="de Grey A.D.N.J."/>
            <person name="Drysdale R.A."/>
            <person name="Harris N.L."/>
            <person name="Richter J."/>
            <person name="Russo S."/>
            <person name="Schroeder A.J."/>
            <person name="Shu S.Q."/>
            <person name="Stapleton M."/>
            <person name="Yamada C."/>
            <person name="Ashburner M."/>
            <person name="Gelbart W.M."/>
            <person name="Rubin G.M."/>
            <person name="Lewis S.E."/>
        </authorList>
    </citation>
    <scope>GENOME REANNOTATION</scope>
    <source>
        <strain>Berkeley</strain>
    </source>
</reference>
<reference key="4">
    <citation type="submission" date="2003-01" db="EMBL/GenBank/DDBJ databases">
        <authorList>
            <person name="Stapleton M."/>
            <person name="Brokstein P."/>
            <person name="Hong L."/>
            <person name="Agbayani A."/>
            <person name="Carlson J.W."/>
            <person name="Champe M."/>
            <person name="Chavez C."/>
            <person name="Dorsett V."/>
            <person name="Dresnek D."/>
            <person name="Farfan D."/>
            <person name="Frise E."/>
            <person name="George R.A."/>
            <person name="Gonzalez M."/>
            <person name="Guarin H."/>
            <person name="Kronmiller B."/>
            <person name="Li P.W."/>
            <person name="Liao G."/>
            <person name="Miranda A."/>
            <person name="Mungall C.J."/>
            <person name="Nunoo J."/>
            <person name="Pacleb J.M."/>
            <person name="Paragas V."/>
            <person name="Park S."/>
            <person name="Patel S."/>
            <person name="Phouanenavong S."/>
            <person name="Wan K.H."/>
            <person name="Yu C."/>
            <person name="Lewis S.E."/>
            <person name="Rubin G.M."/>
            <person name="Celniker S.E."/>
        </authorList>
    </citation>
    <scope>NUCLEOTIDE SEQUENCE [LARGE SCALE MRNA]</scope>
    <source>
        <strain>Berkeley</strain>
        <tissue>Embryo</tissue>
    </source>
</reference>
<reference key="5">
    <citation type="journal article" date="2007" name="Nature">
        <title>A systems biology analysis of the Drosophila phagosome.</title>
        <authorList>
            <person name="Stuart L.M."/>
            <person name="Boulais J."/>
            <person name="Charriere G.M."/>
            <person name="Hennessy E.J."/>
            <person name="Brunet S."/>
            <person name="Jutras I."/>
            <person name="Goyette G."/>
            <person name="Rondeau C."/>
            <person name="Letarte S."/>
            <person name="Huang H."/>
            <person name="Ye P."/>
            <person name="Morales F."/>
            <person name="Kocks C."/>
            <person name="Bader J.S."/>
            <person name="Desjardins M."/>
            <person name="Ezekowitz R.A.B."/>
        </authorList>
    </citation>
    <scope>FUNCTION</scope>
    <scope>SUBCELLULAR LOCATION</scope>
</reference>
<proteinExistence type="evidence at protein level"/>
<evidence type="ECO:0000269" key="1">
    <source>
    </source>
</evidence>
<evidence type="ECO:0000305" key="2"/>
<evidence type="ECO:0000312" key="3">
    <source>
        <dbReference type="FlyBase" id="FBgn0250791"/>
    </source>
</evidence>
<sequence>MGDNEQKALQLMAEAEKKLTQQKGFLGSLFGGSNKVEDAIECYQRAGNMFKMSKNWTKAGECFCEAATLHARAGSRHDAGTCYVDASNCYKKVDVESAVNCLMKSIDIYTDMGRFTMAAKHHQSIAEMYESDPNNLAKSIQHYEQAADYFKGEESVSSANKCMLKVAQYAAQLEDYEKAISIYEQVAASSLESSLLKYSAKEYFFRAALCHLSVDLLNAQHAIEKYAQQYPAFQDSREFKLIKVLCENLEEQNIEGFTEAVKDYDSISRLDQWYTTILLRIKKAADEDPDLR</sequence>
<keyword id="KW-0968">Cytoplasmic vesicle</keyword>
<keyword id="KW-0931">ER-Golgi transport</keyword>
<keyword id="KW-0472">Membrane</keyword>
<keyword id="KW-0653">Protein transport</keyword>
<keyword id="KW-1185">Reference proteome</keyword>
<keyword id="KW-0813">Transport</keyword>
<dbReference type="EMBL" id="U09374">
    <property type="protein sequence ID" value="AAA83414.1"/>
    <property type="molecule type" value="mRNA"/>
</dbReference>
<dbReference type="EMBL" id="AE014296">
    <property type="protein sequence ID" value="AAF49035.1"/>
    <property type="molecule type" value="Genomic_DNA"/>
</dbReference>
<dbReference type="EMBL" id="AY069477">
    <property type="protein sequence ID" value="AAL39622.1"/>
    <property type="molecule type" value="mRNA"/>
</dbReference>
<dbReference type="RefSeq" id="NP_524180.1">
    <property type="nucleotide sequence ID" value="NM_079456.4"/>
</dbReference>
<dbReference type="SMR" id="Q23983"/>
<dbReference type="BioGRID" id="65495">
    <property type="interactions" value="30"/>
</dbReference>
<dbReference type="DIP" id="DIP-19393N"/>
<dbReference type="FunCoup" id="Q23983">
    <property type="interactions" value="2040"/>
</dbReference>
<dbReference type="IntAct" id="Q23983">
    <property type="interactions" value="47"/>
</dbReference>
<dbReference type="STRING" id="7227.FBpp0074609"/>
<dbReference type="PaxDb" id="7227-FBpp0074609"/>
<dbReference type="EnsemblMetazoa" id="FBtr0074840">
    <property type="protein sequence ID" value="FBpp0074609"/>
    <property type="gene ID" value="FBgn0250791"/>
</dbReference>
<dbReference type="GeneID" id="40233"/>
<dbReference type="KEGG" id="dme:Dmel_CG6625"/>
<dbReference type="AGR" id="FB:FBgn0250791"/>
<dbReference type="CTD" id="40233"/>
<dbReference type="FlyBase" id="FBgn0250791">
    <property type="gene designation" value="alphaSnap"/>
</dbReference>
<dbReference type="VEuPathDB" id="VectorBase:FBgn0250791"/>
<dbReference type="eggNOG" id="KOG1586">
    <property type="taxonomic scope" value="Eukaryota"/>
</dbReference>
<dbReference type="GeneTree" id="ENSGT00390000005826"/>
<dbReference type="HOGENOM" id="CLU_046329_0_2_1"/>
<dbReference type="InParanoid" id="Q23983"/>
<dbReference type="OMA" id="WSVKEYL"/>
<dbReference type="OrthoDB" id="9984275at2759"/>
<dbReference type="PhylomeDB" id="Q23983"/>
<dbReference type="Reactome" id="R-DME-204005">
    <property type="pathway name" value="COPII-mediated vesicle transport"/>
</dbReference>
<dbReference type="Reactome" id="R-DME-6807878">
    <property type="pathway name" value="COPI-mediated anterograde transport"/>
</dbReference>
<dbReference type="Reactome" id="R-DME-6811434">
    <property type="pathway name" value="COPI-dependent Golgi-to-ER retrograde traffic"/>
</dbReference>
<dbReference type="Reactome" id="R-DME-6811438">
    <property type="pathway name" value="Intra-Golgi traffic"/>
</dbReference>
<dbReference type="Reactome" id="R-DME-6811440">
    <property type="pathway name" value="Retrograde transport at the Trans-Golgi-Network"/>
</dbReference>
<dbReference type="SignaLink" id="Q23983"/>
<dbReference type="BioGRID-ORCS" id="40233">
    <property type="hits" value="1 hit in 3 CRISPR screens"/>
</dbReference>
<dbReference type="ChiTaRS" id="alphaSnap">
    <property type="organism name" value="fly"/>
</dbReference>
<dbReference type="GenomeRNAi" id="40233"/>
<dbReference type="PRO" id="PR:Q23983"/>
<dbReference type="Proteomes" id="UP000000803">
    <property type="component" value="Chromosome 3L"/>
</dbReference>
<dbReference type="Bgee" id="FBgn0250791">
    <property type="expression patterns" value="Expressed in dorsal cluster neuron (Drosophila) in brain and 261 other cell types or tissues"/>
</dbReference>
<dbReference type="GO" id="GO:0043679">
    <property type="term" value="C:axon terminus"/>
    <property type="evidence" value="ECO:0000314"/>
    <property type="project" value="FlyBase"/>
</dbReference>
<dbReference type="GO" id="GO:0005737">
    <property type="term" value="C:cytoplasm"/>
    <property type="evidence" value="ECO:0000314"/>
    <property type="project" value="FlyBase"/>
</dbReference>
<dbReference type="GO" id="GO:0031410">
    <property type="term" value="C:cytoplasmic vesicle"/>
    <property type="evidence" value="ECO:0000314"/>
    <property type="project" value="UniProtKB"/>
</dbReference>
<dbReference type="GO" id="GO:0016020">
    <property type="term" value="C:membrane"/>
    <property type="evidence" value="ECO:0000314"/>
    <property type="project" value="UniProtKB"/>
</dbReference>
<dbReference type="GO" id="GO:0031201">
    <property type="term" value="C:SNARE complex"/>
    <property type="evidence" value="ECO:0000318"/>
    <property type="project" value="GO_Central"/>
</dbReference>
<dbReference type="GO" id="GO:0043195">
    <property type="term" value="C:terminal bouton"/>
    <property type="evidence" value="ECO:0000314"/>
    <property type="project" value="FlyBase"/>
</dbReference>
<dbReference type="GO" id="GO:0001671">
    <property type="term" value="F:ATPase activator activity"/>
    <property type="evidence" value="ECO:0000250"/>
    <property type="project" value="FlyBase"/>
</dbReference>
<dbReference type="GO" id="GO:0000149">
    <property type="term" value="F:SNARE binding"/>
    <property type="evidence" value="ECO:0000353"/>
    <property type="project" value="FlyBase"/>
</dbReference>
<dbReference type="GO" id="GO:0005483">
    <property type="term" value="F:soluble NSF attachment protein activity"/>
    <property type="evidence" value="ECO:0000314"/>
    <property type="project" value="FlyBase"/>
</dbReference>
<dbReference type="GO" id="GO:0019905">
    <property type="term" value="F:syntaxin binding"/>
    <property type="evidence" value="ECO:0000318"/>
    <property type="project" value="GO_Central"/>
</dbReference>
<dbReference type="GO" id="GO:0007268">
    <property type="term" value="P:chemical synaptic transmission"/>
    <property type="evidence" value="ECO:0000315"/>
    <property type="project" value="FlyBase"/>
</dbReference>
<dbReference type="GO" id="GO:0001745">
    <property type="term" value="P:compound eye morphogenesis"/>
    <property type="evidence" value="ECO:0000315"/>
    <property type="project" value="FlyBase"/>
</dbReference>
<dbReference type="GO" id="GO:0048526">
    <property type="term" value="P:imaginal disc-derived wing expansion"/>
    <property type="evidence" value="ECO:0000315"/>
    <property type="project" value="FlyBase"/>
</dbReference>
<dbReference type="GO" id="GO:0006891">
    <property type="term" value="P:intra-Golgi vesicle-mediated transport"/>
    <property type="evidence" value="ECO:0000315"/>
    <property type="project" value="UniProtKB"/>
</dbReference>
<dbReference type="GO" id="GO:0006886">
    <property type="term" value="P:intracellular protein transport"/>
    <property type="evidence" value="ECO:0000315"/>
    <property type="project" value="UniProtKB"/>
</dbReference>
<dbReference type="GO" id="GO:0000281">
    <property type="term" value="P:mitotic cytokinesis"/>
    <property type="evidence" value="ECO:0000315"/>
    <property type="project" value="FlyBase"/>
</dbReference>
<dbReference type="GO" id="GO:0007274">
    <property type="term" value="P:neuromuscular synaptic transmission"/>
    <property type="evidence" value="ECO:0000270"/>
    <property type="project" value="FlyBase"/>
</dbReference>
<dbReference type="GO" id="GO:0007269">
    <property type="term" value="P:neurotransmitter secretion"/>
    <property type="evidence" value="ECO:0000303"/>
    <property type="project" value="FlyBase"/>
</dbReference>
<dbReference type="GO" id="GO:0035494">
    <property type="term" value="P:SNARE complex disassembly"/>
    <property type="evidence" value="ECO:0000314"/>
    <property type="project" value="FlyBase"/>
</dbReference>
<dbReference type="GO" id="GO:0031629">
    <property type="term" value="P:synaptic vesicle fusion to presynaptic active zone membrane"/>
    <property type="evidence" value="ECO:0000314"/>
    <property type="project" value="FlyBase"/>
</dbReference>
<dbReference type="GO" id="GO:0016082">
    <property type="term" value="P:synaptic vesicle priming"/>
    <property type="evidence" value="ECO:0000303"/>
    <property type="project" value="FlyBase"/>
</dbReference>
<dbReference type="CDD" id="cd15832">
    <property type="entry name" value="SNAP"/>
    <property type="match status" value="1"/>
</dbReference>
<dbReference type="FunFam" id="1.25.40.10:FF:000028">
    <property type="entry name" value="beta-soluble NSF attachment protein-like isoform X1"/>
    <property type="match status" value="1"/>
</dbReference>
<dbReference type="Gene3D" id="1.25.40.10">
    <property type="entry name" value="Tetratricopeptide repeat domain"/>
    <property type="match status" value="1"/>
</dbReference>
<dbReference type="InterPro" id="IPR000744">
    <property type="entry name" value="NSF_attach"/>
</dbReference>
<dbReference type="InterPro" id="IPR011990">
    <property type="entry name" value="TPR-like_helical_dom_sf"/>
</dbReference>
<dbReference type="PANTHER" id="PTHR13768:SF8">
    <property type="entry name" value="ALPHA-SOLUBLE NSF ATTACHMENT PROTEIN"/>
    <property type="match status" value="1"/>
</dbReference>
<dbReference type="PANTHER" id="PTHR13768">
    <property type="entry name" value="SOLUBLE NSF ATTACHMENT PROTEIN SNAP"/>
    <property type="match status" value="1"/>
</dbReference>
<dbReference type="Pfam" id="PF14938">
    <property type="entry name" value="SNAP"/>
    <property type="match status" value="1"/>
</dbReference>
<dbReference type="PRINTS" id="PR00448">
    <property type="entry name" value="NSFATTACHMNT"/>
</dbReference>
<dbReference type="SUPFAM" id="SSF48452">
    <property type="entry name" value="TPR-like"/>
    <property type="match status" value="1"/>
</dbReference>
<name>SNAP_DROME</name>
<organism>
    <name type="scientific">Drosophila melanogaster</name>
    <name type="common">Fruit fly</name>
    <dbReference type="NCBI Taxonomy" id="7227"/>
    <lineage>
        <taxon>Eukaryota</taxon>
        <taxon>Metazoa</taxon>
        <taxon>Ecdysozoa</taxon>
        <taxon>Arthropoda</taxon>
        <taxon>Hexapoda</taxon>
        <taxon>Insecta</taxon>
        <taxon>Pterygota</taxon>
        <taxon>Neoptera</taxon>
        <taxon>Endopterygota</taxon>
        <taxon>Diptera</taxon>
        <taxon>Brachycera</taxon>
        <taxon>Muscomorpha</taxon>
        <taxon>Ephydroidea</taxon>
        <taxon>Drosophilidae</taxon>
        <taxon>Drosophila</taxon>
        <taxon>Sophophora</taxon>
    </lineage>
</organism>
<feature type="chain" id="PRO_0000219065" description="Alpha-soluble NSF attachment protein">
    <location>
        <begin position="1"/>
        <end position="292"/>
    </location>
</feature>